<sequence length="172" mass="20613">MSAQVSLELHHRISQFLFHEASLLDDWKFRDWLAQLDEEIRYTMRTTVNAQTRDRRKGVQPPTTWIFNDTKDQLERRIARLETGMAWAEEPPSRTRHLISNCQVSETDIPNVFAVRVNYLLYRAQKERDETFYVGTRFDKVRRLEYDNWRLLERDIVLDQAVITSHNLSVLF</sequence>
<feature type="chain" id="PRO_0000333716" description="3-phenylpropionate/cinnamic acid dioxygenase subunit beta">
    <location>
        <begin position="1"/>
        <end position="172"/>
    </location>
</feature>
<dbReference type="EC" id="1.14.12.19" evidence="1"/>
<dbReference type="EMBL" id="CP000266">
    <property type="protein sequence ID" value="ABF04685.1"/>
    <property type="molecule type" value="Genomic_DNA"/>
</dbReference>
<dbReference type="RefSeq" id="WP_001276078.1">
    <property type="nucleotide sequence ID" value="NC_008258.1"/>
</dbReference>
<dbReference type="SMR" id="Q0T1Y0"/>
<dbReference type="KEGG" id="sfv:SFV_2587"/>
<dbReference type="HOGENOM" id="CLU_102527_1_1_6"/>
<dbReference type="UniPathway" id="UPA00714"/>
<dbReference type="Proteomes" id="UP000000659">
    <property type="component" value="Chromosome"/>
</dbReference>
<dbReference type="GO" id="GO:0008695">
    <property type="term" value="F:3-phenylpropionate dioxygenase activity"/>
    <property type="evidence" value="ECO:0007669"/>
    <property type="project" value="UniProtKB-UniRule"/>
</dbReference>
<dbReference type="GO" id="GO:0019380">
    <property type="term" value="P:3-phenylpropionate catabolic process"/>
    <property type="evidence" value="ECO:0007669"/>
    <property type="project" value="UniProtKB-UniRule"/>
</dbReference>
<dbReference type="CDD" id="cd00667">
    <property type="entry name" value="ring_hydroxylating_dioxygenases_beta"/>
    <property type="match status" value="1"/>
</dbReference>
<dbReference type="FunFam" id="3.10.450.50:FF:000008">
    <property type="entry name" value="3-phenylpropionate/cinnamic acid dioxygenase subunit beta"/>
    <property type="match status" value="1"/>
</dbReference>
<dbReference type="Gene3D" id="3.10.450.50">
    <property type="match status" value="1"/>
</dbReference>
<dbReference type="HAMAP" id="MF_01649">
    <property type="entry name" value="HcaF"/>
    <property type="match status" value="1"/>
</dbReference>
<dbReference type="InterPro" id="IPR054881">
    <property type="entry name" value="3PPDioc_HcaF"/>
</dbReference>
<dbReference type="InterPro" id="IPR023712">
    <property type="entry name" value="HcaF"/>
</dbReference>
<dbReference type="InterPro" id="IPR032710">
    <property type="entry name" value="NTF2-like_dom_sf"/>
</dbReference>
<dbReference type="InterPro" id="IPR000391">
    <property type="entry name" value="Rng_hydr_dOase-bsu"/>
</dbReference>
<dbReference type="NCBIfam" id="NF042947">
    <property type="entry name" value="3PPDioc_HcaF"/>
    <property type="match status" value="1"/>
</dbReference>
<dbReference type="NCBIfam" id="NF007479">
    <property type="entry name" value="PRK10069.1"/>
    <property type="match status" value="1"/>
</dbReference>
<dbReference type="PANTHER" id="PTHR41534:SF2">
    <property type="entry name" value="3-PHENYLPROPIONATE_CINNAMIC ACID DIOXYGENASE SUBUNIT BETA"/>
    <property type="match status" value="1"/>
</dbReference>
<dbReference type="PANTHER" id="PTHR41534">
    <property type="entry name" value="BLR3401 PROTEIN"/>
    <property type="match status" value="1"/>
</dbReference>
<dbReference type="Pfam" id="PF00866">
    <property type="entry name" value="Ring_hydroxyl_B"/>
    <property type="match status" value="1"/>
</dbReference>
<dbReference type="SUPFAM" id="SSF54427">
    <property type="entry name" value="NTF2-like"/>
    <property type="match status" value="1"/>
</dbReference>
<gene>
    <name evidence="1" type="primary">hcaF</name>
    <name type="ordered locus">SFV_2587</name>
</gene>
<evidence type="ECO:0000255" key="1">
    <source>
        <dbReference type="HAMAP-Rule" id="MF_01649"/>
    </source>
</evidence>
<protein>
    <recommendedName>
        <fullName evidence="1">3-phenylpropionate/cinnamic acid dioxygenase subunit beta</fullName>
        <ecNumber evidence="1">1.14.12.19</ecNumber>
    </recommendedName>
</protein>
<organism>
    <name type="scientific">Shigella flexneri serotype 5b (strain 8401)</name>
    <dbReference type="NCBI Taxonomy" id="373384"/>
    <lineage>
        <taxon>Bacteria</taxon>
        <taxon>Pseudomonadati</taxon>
        <taxon>Pseudomonadota</taxon>
        <taxon>Gammaproteobacteria</taxon>
        <taxon>Enterobacterales</taxon>
        <taxon>Enterobacteriaceae</taxon>
        <taxon>Shigella</taxon>
    </lineage>
</organism>
<name>HCAF_SHIF8</name>
<comment type="function">
    <text evidence="1">Part of the multicomponent 3-phenylpropionate dioxygenase. Converts 3-phenylpropionic acid (PP) and cinnamic acid (CI) into 3-phenylpropionate-dihydrodiol (PP-dihydrodiol) and cinnamic acid-dihydrodiol (CI-dihydrodiol), respectively.</text>
</comment>
<comment type="catalytic activity">
    <reaction evidence="1">
        <text>3-phenylpropanoate + NADH + O2 + H(+) = 3-(cis-5,6-dihydroxycyclohexa-1,3-dien-1-yl)propanoate + NAD(+)</text>
        <dbReference type="Rhea" id="RHEA:20357"/>
        <dbReference type="ChEBI" id="CHEBI:15378"/>
        <dbReference type="ChEBI" id="CHEBI:15379"/>
        <dbReference type="ChEBI" id="CHEBI:51057"/>
        <dbReference type="ChEBI" id="CHEBI:57540"/>
        <dbReference type="ChEBI" id="CHEBI:57945"/>
        <dbReference type="ChEBI" id="CHEBI:60087"/>
        <dbReference type="EC" id="1.14.12.19"/>
    </reaction>
</comment>
<comment type="catalytic activity">
    <reaction evidence="1">
        <text>(E)-cinnamate + NADH + O2 + H(+) = (2E)-3-(cis-5,6-dihydroxycyclohexa-1,3-dien-1-yl)prop-2-enoate + NAD(+)</text>
        <dbReference type="Rhea" id="RHEA:25058"/>
        <dbReference type="ChEBI" id="CHEBI:15378"/>
        <dbReference type="ChEBI" id="CHEBI:15379"/>
        <dbReference type="ChEBI" id="CHEBI:15669"/>
        <dbReference type="ChEBI" id="CHEBI:57540"/>
        <dbReference type="ChEBI" id="CHEBI:57945"/>
        <dbReference type="ChEBI" id="CHEBI:61451"/>
        <dbReference type="EC" id="1.14.12.19"/>
    </reaction>
</comment>
<comment type="pathway">
    <text evidence="1">Aromatic compound metabolism; 3-phenylpropanoate degradation.</text>
</comment>
<comment type="subunit">
    <text evidence="1">This dioxygenase system consists of four proteins: the two subunits of the hydroxylase component (HcaE and HcaF), a ferredoxin (HcaC) and a ferredoxin reductase (HcaD).</text>
</comment>
<comment type="similarity">
    <text evidence="1">Belongs to the bacterial ring-hydroxylating dioxygenase beta subunit family.</text>
</comment>
<reference key="1">
    <citation type="journal article" date="2006" name="BMC Genomics">
        <title>Complete genome sequence of Shigella flexneri 5b and comparison with Shigella flexneri 2a.</title>
        <authorList>
            <person name="Nie H."/>
            <person name="Yang F."/>
            <person name="Zhang X."/>
            <person name="Yang J."/>
            <person name="Chen L."/>
            <person name="Wang J."/>
            <person name="Xiong Z."/>
            <person name="Peng J."/>
            <person name="Sun L."/>
            <person name="Dong J."/>
            <person name="Xue Y."/>
            <person name="Xu X."/>
            <person name="Chen S."/>
            <person name="Yao Z."/>
            <person name="Shen Y."/>
            <person name="Jin Q."/>
        </authorList>
    </citation>
    <scope>NUCLEOTIDE SEQUENCE [LARGE SCALE GENOMIC DNA]</scope>
    <source>
        <strain>8401</strain>
    </source>
</reference>
<keyword id="KW-0058">Aromatic hydrocarbons catabolism</keyword>
<keyword id="KW-0223">Dioxygenase</keyword>
<keyword id="KW-0520">NAD</keyword>
<keyword id="KW-0560">Oxidoreductase</keyword>
<proteinExistence type="inferred from homology"/>
<accession>Q0T1Y0</accession>